<reference key="1">
    <citation type="journal article" date="2003" name="Science">
        <title>The genome sequence of the SARS-associated coronavirus.</title>
        <authorList>
            <person name="Marra M.A."/>
            <person name="Jones S.J.M."/>
            <person name="Astell C.R."/>
            <person name="Holt R.A."/>
            <person name="Brooks-Wilson A."/>
            <person name="Butterfield Y.S.N."/>
            <person name="Khattra J."/>
            <person name="Asano J.K."/>
            <person name="Barber S.A."/>
            <person name="Chan S.Y."/>
            <person name="Cloutier A."/>
            <person name="Coughlin S.M."/>
            <person name="Freeman D."/>
            <person name="Girn N."/>
            <person name="Griffith O.L."/>
            <person name="Leach S.R."/>
            <person name="Mayo M."/>
            <person name="McDonald H."/>
            <person name="Montgomery S.B."/>
            <person name="Pandoh P.K."/>
            <person name="Petrescu A.S."/>
            <person name="Robertson A.G."/>
            <person name="Schein J.E."/>
            <person name="Siddiqui A."/>
            <person name="Smailus D.E."/>
            <person name="Stott J.M."/>
            <person name="Yang G.S."/>
            <person name="Plummer F."/>
            <person name="Andonov A."/>
            <person name="Artsob H."/>
            <person name="Bastien N."/>
            <person name="Bernard K."/>
            <person name="Booth T.F."/>
            <person name="Bowness D."/>
            <person name="Czub M."/>
            <person name="Drebot M."/>
            <person name="Fernando L."/>
            <person name="Flick R."/>
            <person name="Garbutt M."/>
            <person name="Gray M."/>
            <person name="Grolla A."/>
            <person name="Jones S."/>
            <person name="Feldmann H."/>
            <person name="Meyers A."/>
            <person name="Kabani A."/>
            <person name="Li Y."/>
            <person name="Normand S."/>
            <person name="Stroher U."/>
            <person name="Tipples G.A."/>
            <person name="Tyler S."/>
            <person name="Vogrig R."/>
            <person name="Ward D."/>
            <person name="Watson B."/>
            <person name="Brunham R.C."/>
            <person name="Krajden M."/>
            <person name="Petric M."/>
            <person name="Skowronski D.M."/>
            <person name="Upton C."/>
            <person name="Roper R.L."/>
        </authorList>
    </citation>
    <scope>NUCLEOTIDE SEQUENCE [GENOMIC RNA]</scope>
    <source>
        <strain>Isolate Tor2</strain>
    </source>
</reference>
<organismHost>
    <name type="scientific">Homo sapiens</name>
    <name type="common">Human</name>
    <dbReference type="NCBI Taxonomy" id="9606"/>
</organismHost>
<organismHost>
    <name type="scientific">Paguma larvata</name>
    <name type="common">Masked palm civet</name>
    <dbReference type="NCBI Taxonomy" id="9675"/>
</organismHost>
<protein>
    <recommendedName>
        <fullName>Uncharacterized protein 14</fullName>
    </recommendedName>
</protein>
<accession>Q7TLC7</accession>
<gene>
    <name type="ORF">ORF14</name>
</gene>
<name>Y14_SARS</name>
<keyword id="KW-1185">Reference proteome</keyword>
<sequence length="70" mass="7852">MLPPCYNFLKEQHCQKASTQREAEAAVKPLLAPHHVVAVIQEIQLLAAVGEILLLEWLAEVVKLPSRYCC</sequence>
<feature type="chain" id="PRO_0000289937" description="Uncharacterized protein 14">
    <location>
        <begin position="1"/>
        <end position="70"/>
    </location>
</feature>
<comment type="interaction">
    <interactant intactId="EBI-25488942">
        <id>Q7TLC7</id>
    </interactant>
    <interactant intactId="EBI-9021274">
        <id>P59636</id>
        <label>9b</label>
    </interactant>
    <organismsDiffer>false</organismsDiffer>
    <experiments>3</experiments>
</comment>
<comment type="interaction">
    <interactant intactId="EBI-25488942">
        <id>Q7TLC7</id>
    </interactant>
    <interactant intactId="EBI-25488942">
        <id>Q7TLC7</id>
        <label>ORF14</label>
    </interactant>
    <organismsDiffer>false</organismsDiffer>
    <experiments>3</experiments>
</comment>
<comment type="interaction">
    <interactant intactId="EBI-25488942">
        <id>Q7TLC7</id>
    </interactant>
    <interactant intactId="EBI-715074">
        <id>Q13561</id>
        <label>DCTN2</label>
    </interactant>
    <organismsDiffer>true</organismsDiffer>
    <experiments>2</experiments>
</comment>
<comment type="interaction">
    <interactant intactId="EBI-25488942">
        <id>Q7TLC7</id>
    </interactant>
    <interactant intactId="EBI-740220">
        <id>O14964</id>
        <label>HGS</label>
    </interactant>
    <organismsDiffer>true</organismsDiffer>
    <experiments>2</experiments>
</comment>
<proteinExistence type="evidence at protein level"/>
<dbReference type="EMBL" id="AY274119">
    <property type="protein sequence ID" value="AAP41049.1"/>
    <property type="molecule type" value="Genomic_RNA"/>
</dbReference>
<dbReference type="BioGRID" id="4383925">
    <property type="interactions" value="11"/>
</dbReference>
<dbReference type="IntAct" id="Q7TLC7">
    <property type="interactions" value="30"/>
</dbReference>
<dbReference type="MINT" id="Q7TLC7"/>
<dbReference type="Proteomes" id="UP000000354">
    <property type="component" value="Segment"/>
</dbReference>
<dbReference type="GO" id="GO:0042802">
    <property type="term" value="F:identical protein binding"/>
    <property type="evidence" value="ECO:0000353"/>
    <property type="project" value="IntAct"/>
</dbReference>
<dbReference type="CDD" id="cd21976">
    <property type="entry name" value="SARS-CoV_ORF9c"/>
    <property type="match status" value="1"/>
</dbReference>
<dbReference type="InterPro" id="IPR035113">
    <property type="entry name" value="Protein_14_SARS-like"/>
</dbReference>
<dbReference type="Pfam" id="PF17635">
    <property type="entry name" value="bCoV_Orf14"/>
    <property type="match status" value="1"/>
</dbReference>
<organism>
    <name type="scientific">Severe acute respiratory syndrome coronavirus</name>
    <name type="common">SARS-CoV</name>
    <dbReference type="NCBI Taxonomy" id="694009"/>
    <lineage>
        <taxon>Viruses</taxon>
        <taxon>Riboviria</taxon>
        <taxon>Orthornavirae</taxon>
        <taxon>Pisuviricota</taxon>
        <taxon>Pisoniviricetes</taxon>
        <taxon>Nidovirales</taxon>
        <taxon>Cornidovirineae</taxon>
        <taxon>Coronaviridae</taxon>
        <taxon>Orthocoronavirinae</taxon>
        <taxon>Betacoronavirus</taxon>
        <taxon>Sarbecovirus</taxon>
    </lineage>
</organism>